<name>CA1AB_CONAN</name>
<feature type="peptide" id="PRO_0000249780" description="Alpha-conotoxin AnIB" evidence="2">
    <location>
        <begin position="1"/>
        <end position="17"/>
    </location>
</feature>
<feature type="peptide" id="PRO_0000249781" description="Alpha-conotoxin AnIA" evidence="2">
    <location>
        <begin position="3"/>
        <end position="17"/>
    </location>
</feature>
<feature type="region of interest" description="Ser-Xaa-Pro motif, crucial for potent interaction with nAChR" evidence="1">
    <location>
        <begin position="5"/>
        <end position="7"/>
    </location>
</feature>
<feature type="modified residue" description="Sulfotyrosine" evidence="2">
    <location>
        <position position="16"/>
    </location>
</feature>
<feature type="modified residue" description="Cysteine amide" evidence="2">
    <location>
        <position position="17"/>
    </location>
</feature>
<feature type="disulfide bond" evidence="7 8">
    <location>
        <begin position="3"/>
        <end position="9"/>
    </location>
</feature>
<feature type="disulfide bond" evidence="7 8">
    <location>
        <begin position="4"/>
        <end position="17"/>
    </location>
</feature>
<feature type="mutagenesis site" description="1.4-fold increase in inhibitory potency on alpha-3-beta-2/CHRNA3-CHRNB2." evidence="2">
    <original>G</original>
    <variation>GG</variation>
    <location>
        <position position="1"/>
    </location>
</feature>
<feature type="mutagenesis site" description="1.6-fold increase in inhibitory potency on alpha-3-beta-2/CHRNA3-CHRNB2." evidence="2">
    <location>
        <position position="1"/>
    </location>
</feature>
<feature type="helix" evidence="12">
    <location>
        <begin position="3"/>
        <end position="5"/>
    </location>
</feature>
<feature type="helix" evidence="12">
    <location>
        <begin position="7"/>
        <end position="12"/>
    </location>
</feature>
<feature type="turn" evidence="12">
    <location>
        <begin position="14"/>
        <end position="16"/>
    </location>
</feature>
<reference key="1">
    <citation type="journal article" date="2004" name="J. Med. Chem.">
        <title>Chemical and functional identification and characterization of novel sulfated alpha-conotoxins from the cone snail Conus anemone.</title>
        <authorList>
            <person name="Loughnan M.L."/>
            <person name="Nicke A."/>
            <person name="Jones A."/>
            <person name="Adams D.J."/>
            <person name="Alewood P.F."/>
            <person name="Lewis R.J."/>
        </authorList>
    </citation>
    <scope>PROTEIN SEQUENCE</scope>
    <scope>SULFATION AT TYR-16</scope>
    <scope>AMIDATION AT CYS-17</scope>
    <scope>MASS SPECTROMETRY</scope>
    <scope>SYNTHESIS</scope>
    <scope>SUBCELLULAR LOCATION</scope>
    <scope>MUTAGENESIS OF GLY-1</scope>
    <source>
        <tissue>Venom</tissue>
    </source>
</reference>
<reference evidence="8 9 10 11" key="2">
    <citation type="journal article" date="2021" name="RSC Med. Chem.">
        <title>Posttranslational modifications of alpha-conotoxins: sulfotyrosine and C-terminal amidation stabilise structures and increase acetylcholine receptor binding.</title>
        <authorList>
            <person name="Ho T.N.T."/>
            <person name="Lee H.S."/>
            <person name="Swaminathan S."/>
            <person name="Goodwin L."/>
            <person name="Rai N."/>
            <person name="Ushay B."/>
            <person name="Lewis R.J."/>
            <person name="Rosengren K.J."/>
            <person name="Conibear A.C."/>
        </authorList>
    </citation>
    <scope>STRUCTURE BY NMR (SULFATED ALPHA-CONOTOXIN ANIB)</scope>
    <scope>SYNTHESIS (SULFATED; NON-SULFATED; AMIDATED AND NON-AMIDATED ALPHA-CONOTOXIN ANIB CONOTOXIN)</scope>
    <scope>PTM</scope>
</reference>
<evidence type="ECO:0000250" key="1">
    <source>
        <dbReference type="UniProtKB" id="P56636"/>
    </source>
</evidence>
<evidence type="ECO:0000269" key="2">
    <source>
    </source>
</evidence>
<evidence type="ECO:0000269" key="3">
    <source>
    </source>
</evidence>
<evidence type="ECO:0000303" key="4">
    <source>
    </source>
</evidence>
<evidence type="ECO:0000305" key="5"/>
<evidence type="ECO:0000305" key="6">
    <source>
    </source>
</evidence>
<evidence type="ECO:0000305" key="7">
    <source>
    </source>
</evidence>
<evidence type="ECO:0007744" key="8">
    <source>
        <dbReference type="PDB" id="7N20"/>
    </source>
</evidence>
<evidence type="ECO:0007744" key="9">
    <source>
        <dbReference type="PDB" id="7N21"/>
    </source>
</evidence>
<evidence type="ECO:0007744" key="10">
    <source>
        <dbReference type="PDB" id="7N22"/>
    </source>
</evidence>
<evidence type="ECO:0007744" key="11">
    <source>
        <dbReference type="PDB" id="7N23"/>
    </source>
</evidence>
<evidence type="ECO:0007829" key="12">
    <source>
        <dbReference type="PDB" id="7N20"/>
    </source>
</evidence>
<dbReference type="PDB" id="7N20">
    <property type="method" value="NMR"/>
    <property type="chains" value="A=1-17"/>
</dbReference>
<dbReference type="PDB" id="7N21">
    <property type="method" value="NMR"/>
    <property type="chains" value="A=1-17"/>
</dbReference>
<dbReference type="PDB" id="7N22">
    <property type="method" value="NMR"/>
    <property type="chains" value="A=1-17"/>
</dbReference>
<dbReference type="PDB" id="7N23">
    <property type="method" value="NMR"/>
    <property type="chains" value="A=1-17"/>
</dbReference>
<dbReference type="PDBsum" id="7N20"/>
<dbReference type="PDBsum" id="7N21"/>
<dbReference type="PDBsum" id="7N22"/>
<dbReference type="PDBsum" id="7N23"/>
<dbReference type="SMR" id="P0C1V7"/>
<dbReference type="ConoServer" id="15">
    <property type="toxin name" value="AnIB"/>
</dbReference>
<dbReference type="GO" id="GO:0005576">
    <property type="term" value="C:extracellular region"/>
    <property type="evidence" value="ECO:0007669"/>
    <property type="project" value="UniProtKB-SubCell"/>
</dbReference>
<dbReference type="GO" id="GO:0035792">
    <property type="term" value="C:host cell postsynaptic membrane"/>
    <property type="evidence" value="ECO:0007669"/>
    <property type="project" value="UniProtKB-KW"/>
</dbReference>
<dbReference type="GO" id="GO:0030550">
    <property type="term" value="F:acetylcholine receptor inhibitor activity"/>
    <property type="evidence" value="ECO:0007669"/>
    <property type="project" value="UniProtKB-KW"/>
</dbReference>
<dbReference type="GO" id="GO:0099106">
    <property type="term" value="F:ion channel regulator activity"/>
    <property type="evidence" value="ECO:0007669"/>
    <property type="project" value="UniProtKB-KW"/>
</dbReference>
<dbReference type="GO" id="GO:0090729">
    <property type="term" value="F:toxin activity"/>
    <property type="evidence" value="ECO:0007669"/>
    <property type="project" value="UniProtKB-KW"/>
</dbReference>
<dbReference type="InterPro" id="IPR018072">
    <property type="entry name" value="Conotoxin_a-typ_CS"/>
</dbReference>
<dbReference type="PROSITE" id="PS60014">
    <property type="entry name" value="ALPHA_CONOTOXIN"/>
    <property type="match status" value="1"/>
</dbReference>
<sequence length="17" mass="1714">GGCCSHPACAANNQDYC</sequence>
<keyword id="KW-0002">3D-structure</keyword>
<keyword id="KW-0008">Acetylcholine receptor inhibiting toxin</keyword>
<keyword id="KW-0027">Amidation</keyword>
<keyword id="KW-0903">Direct protein sequencing</keyword>
<keyword id="KW-1015">Disulfide bond</keyword>
<keyword id="KW-0872">Ion channel impairing toxin</keyword>
<keyword id="KW-0528">Neurotoxin</keyword>
<keyword id="KW-0629">Postsynaptic neurotoxin</keyword>
<keyword id="KW-0964">Secreted</keyword>
<keyword id="KW-0765">Sulfation</keyword>
<keyword id="KW-0800">Toxin</keyword>
<accession>P0C1V7</accession>
<comment type="function">
    <molecule>Alpha-conotoxin AnIB</molecule>
    <text evidence="2">Alpha-conotoxins act on postsynaptic membranes, they bind to the nicotinic acetylcholine receptors (nAChR) and thus inhibit them. This synthetic toxin blocks rat alpha-3beta-2/CHRNA3-CHRNB2 nAChRs (IC(50)=0.3 nM) and alpha-7/CHRNA7 nAChRs (IC(50)=76 nM).</text>
</comment>
<comment type="function">
    <molecule>Alpha-conotoxin AnIA</molecule>
    <text evidence="2">This synthetic toxin blocks rat alpha-3-beta-2/CHRNA3-CHRNB2 nAChRs (IC(50)=0.2 nM).</text>
</comment>
<comment type="subcellular location">
    <subcellularLocation>
        <location evidence="2">Secreted</location>
    </subcellularLocation>
</comment>
<comment type="tissue specificity">
    <text evidence="6">Expressed by the venom duct.</text>
</comment>
<comment type="domain">
    <text evidence="5">The cysteine framework is I (CC-C-C). Alpha4/7 pattern.</text>
</comment>
<comment type="PTM">
    <text evidence="2 3">C-terminal amidation, in synergy with sulfation, is important for activity and structure stability (PubMed:14971903, PubMed:34671739). Non-amidated conotoxins has a 1.9-fold lower inhibitory potency on alpha-3-beta-2/CHRNA3-CHRNB2 nAChRs (IC(50)=0.54 nM), and a 4.8-fold lower inhibitory potency on alpha-7/CHRNA7 nAChRs (IC(50)=367 nM), when compared to sulfated conotoxin (PubMed:14971903).</text>
</comment>
<comment type="PTM">
    <text evidence="2 3">Sulfation at Tyr-16, in synergy with amidation, is important for activity and structure stability (PubMed:14971903, PubMed:34671739). Non-sulfated conotoxin has a 2.3-fold lower inhibitory potency on alpha-3-beta-2/CHRNA3-CHRNB2 nAChRs (IC(50)=0.64 nM), and a 11-fold lower inhibitory potency on alpha-7/CHRNA7 nAChRs (IC(50)=836 nM), when compared to sulfated conotoxin (PubMed:14971903).</text>
</comment>
<comment type="mass spectrometry" mass="1787.4" method="Electrospray" evidence="2">
    <molecule>Alpha-conotoxin AnIB</molecule>
</comment>
<comment type="mass spectrometry" mass="1673.4" method="Electrospray" evidence="2">
    <molecule>Alpha-conotoxin AnIA</molecule>
</comment>
<comment type="similarity">
    <text evidence="5">Belongs to the conotoxin A superfamily.</text>
</comment>
<protein>
    <recommendedName>
        <fullName evidence="4">Alpha-conotoxin AnIB</fullName>
    </recommendedName>
    <component>
        <recommendedName>
            <fullName evidence="4">Alpha-conotoxin AnIA</fullName>
        </recommendedName>
    </component>
</protein>
<proteinExistence type="evidence at protein level"/>
<organism>
    <name type="scientific">Conus anemone</name>
    <name type="common">Anemone cone</name>
    <dbReference type="NCBI Taxonomy" id="101285"/>
    <lineage>
        <taxon>Eukaryota</taxon>
        <taxon>Metazoa</taxon>
        <taxon>Spiralia</taxon>
        <taxon>Lophotrochozoa</taxon>
        <taxon>Mollusca</taxon>
        <taxon>Gastropoda</taxon>
        <taxon>Caenogastropoda</taxon>
        <taxon>Neogastropoda</taxon>
        <taxon>Conoidea</taxon>
        <taxon>Conidae</taxon>
        <taxon>Conus</taxon>
        <taxon>Floraconus</taxon>
    </lineage>
</organism>